<name>UREG_DELAS</name>
<feature type="chain" id="PRO_0000347387" description="Urease accessory protein UreG">
    <location>
        <begin position="1"/>
        <end position="213"/>
    </location>
</feature>
<feature type="binding site" evidence="1">
    <location>
        <begin position="17"/>
        <end position="24"/>
    </location>
    <ligand>
        <name>GTP</name>
        <dbReference type="ChEBI" id="CHEBI:37565"/>
    </ligand>
</feature>
<keyword id="KW-0143">Chaperone</keyword>
<keyword id="KW-0963">Cytoplasm</keyword>
<keyword id="KW-0342">GTP-binding</keyword>
<keyword id="KW-0996">Nickel insertion</keyword>
<keyword id="KW-0547">Nucleotide-binding</keyword>
<keyword id="KW-1185">Reference proteome</keyword>
<accession>A9BUC1</accession>
<dbReference type="EMBL" id="CP000884">
    <property type="protein sequence ID" value="ABX33824.1"/>
    <property type="molecule type" value="Genomic_DNA"/>
</dbReference>
<dbReference type="RefSeq" id="WP_012203110.1">
    <property type="nucleotide sequence ID" value="NC_010002.1"/>
</dbReference>
<dbReference type="SMR" id="A9BUC1"/>
<dbReference type="STRING" id="398578.Daci_1179"/>
<dbReference type="GeneID" id="24115272"/>
<dbReference type="KEGG" id="dac:Daci_1179"/>
<dbReference type="eggNOG" id="COG0378">
    <property type="taxonomic scope" value="Bacteria"/>
</dbReference>
<dbReference type="HOGENOM" id="CLU_072144_1_0_4"/>
<dbReference type="Proteomes" id="UP000000784">
    <property type="component" value="Chromosome"/>
</dbReference>
<dbReference type="GO" id="GO:0005737">
    <property type="term" value="C:cytoplasm"/>
    <property type="evidence" value="ECO:0007669"/>
    <property type="project" value="UniProtKB-SubCell"/>
</dbReference>
<dbReference type="GO" id="GO:0005525">
    <property type="term" value="F:GTP binding"/>
    <property type="evidence" value="ECO:0007669"/>
    <property type="project" value="UniProtKB-KW"/>
</dbReference>
<dbReference type="GO" id="GO:0003924">
    <property type="term" value="F:GTPase activity"/>
    <property type="evidence" value="ECO:0007669"/>
    <property type="project" value="InterPro"/>
</dbReference>
<dbReference type="GO" id="GO:0016151">
    <property type="term" value="F:nickel cation binding"/>
    <property type="evidence" value="ECO:0007669"/>
    <property type="project" value="UniProtKB-UniRule"/>
</dbReference>
<dbReference type="GO" id="GO:0043419">
    <property type="term" value="P:urea catabolic process"/>
    <property type="evidence" value="ECO:0007669"/>
    <property type="project" value="InterPro"/>
</dbReference>
<dbReference type="CDD" id="cd05540">
    <property type="entry name" value="UreG"/>
    <property type="match status" value="1"/>
</dbReference>
<dbReference type="FunFam" id="3.40.50.300:FF:000208">
    <property type="entry name" value="Urease accessory protein UreG"/>
    <property type="match status" value="1"/>
</dbReference>
<dbReference type="Gene3D" id="3.40.50.300">
    <property type="entry name" value="P-loop containing nucleotide triphosphate hydrolases"/>
    <property type="match status" value="1"/>
</dbReference>
<dbReference type="HAMAP" id="MF_01389">
    <property type="entry name" value="UreG"/>
    <property type="match status" value="1"/>
</dbReference>
<dbReference type="InterPro" id="IPR003495">
    <property type="entry name" value="CobW/HypB/UreG_nucleotide-bd"/>
</dbReference>
<dbReference type="InterPro" id="IPR027417">
    <property type="entry name" value="P-loop_NTPase"/>
</dbReference>
<dbReference type="InterPro" id="IPR004400">
    <property type="entry name" value="UreG"/>
</dbReference>
<dbReference type="NCBIfam" id="TIGR00101">
    <property type="entry name" value="ureG"/>
    <property type="match status" value="1"/>
</dbReference>
<dbReference type="PANTHER" id="PTHR31715">
    <property type="entry name" value="UREASE ACCESSORY PROTEIN G"/>
    <property type="match status" value="1"/>
</dbReference>
<dbReference type="PANTHER" id="PTHR31715:SF0">
    <property type="entry name" value="UREASE ACCESSORY PROTEIN G"/>
    <property type="match status" value="1"/>
</dbReference>
<dbReference type="Pfam" id="PF02492">
    <property type="entry name" value="cobW"/>
    <property type="match status" value="1"/>
</dbReference>
<dbReference type="PIRSF" id="PIRSF005624">
    <property type="entry name" value="Ni-bind_GTPase"/>
    <property type="match status" value="1"/>
</dbReference>
<dbReference type="SUPFAM" id="SSF52540">
    <property type="entry name" value="P-loop containing nucleoside triphosphate hydrolases"/>
    <property type="match status" value="1"/>
</dbReference>
<proteinExistence type="inferred from homology"/>
<organism>
    <name type="scientific">Delftia acidovorans (strain DSM 14801 / SPH-1)</name>
    <dbReference type="NCBI Taxonomy" id="398578"/>
    <lineage>
        <taxon>Bacteria</taxon>
        <taxon>Pseudomonadati</taxon>
        <taxon>Pseudomonadota</taxon>
        <taxon>Betaproteobacteria</taxon>
        <taxon>Burkholderiales</taxon>
        <taxon>Comamonadaceae</taxon>
        <taxon>Delftia</taxon>
    </lineage>
</organism>
<sequence length="213" mass="23043">MNTRTKKLPPLRVGIGGPVGSGKTTLLEMLCKAMRAHYDLVVITNDIYTKEDQRLLTVAEALPPERIMGVETGGCPHTAIREDASINLEAVDRMLRQFPEADIVFIESGGDNLAATFSPELSDLTIYVIDVAGGEKIPRKGGPGITKSDLLVVNKTDLAPYVGANLSIMEADTQRMRAHKPYVMGSVKSGKGLREVIDFITERGLLPPMPAQG</sequence>
<reference key="1">
    <citation type="submission" date="2007-11" db="EMBL/GenBank/DDBJ databases">
        <title>Complete sequence of Delftia acidovorans DSM 14801 / SPH-1.</title>
        <authorList>
            <person name="Copeland A."/>
            <person name="Lucas S."/>
            <person name="Lapidus A."/>
            <person name="Barry K."/>
            <person name="Glavina del Rio T."/>
            <person name="Dalin E."/>
            <person name="Tice H."/>
            <person name="Pitluck S."/>
            <person name="Lowry S."/>
            <person name="Clum A."/>
            <person name="Schmutz J."/>
            <person name="Larimer F."/>
            <person name="Land M."/>
            <person name="Hauser L."/>
            <person name="Kyrpides N."/>
            <person name="Kim E."/>
            <person name="Schleheck D."/>
            <person name="Richardson P."/>
        </authorList>
    </citation>
    <scope>NUCLEOTIDE SEQUENCE [LARGE SCALE GENOMIC DNA]</scope>
    <source>
        <strain>DSM 14801 / SPH-1</strain>
    </source>
</reference>
<evidence type="ECO:0000255" key="1">
    <source>
        <dbReference type="HAMAP-Rule" id="MF_01389"/>
    </source>
</evidence>
<comment type="function">
    <text evidence="1">Facilitates the functional incorporation of the urease nickel metallocenter. This process requires GTP hydrolysis, probably effectuated by UreG.</text>
</comment>
<comment type="subunit">
    <text evidence="1">Homodimer. UreD, UreF and UreG form a complex that acts as a GTP-hydrolysis-dependent molecular chaperone, activating the urease apoprotein by helping to assemble the nickel containing metallocenter of UreC. The UreE protein probably delivers the nickel.</text>
</comment>
<comment type="subcellular location">
    <subcellularLocation>
        <location evidence="1">Cytoplasm</location>
    </subcellularLocation>
</comment>
<comment type="similarity">
    <text evidence="1">Belongs to the SIMIBI class G3E GTPase family. UreG subfamily.</text>
</comment>
<gene>
    <name evidence="1" type="primary">ureG</name>
    <name type="ordered locus">Daci_1179</name>
</gene>
<protein>
    <recommendedName>
        <fullName evidence="1">Urease accessory protein UreG</fullName>
    </recommendedName>
</protein>